<sequence length="303" mass="33373">MTTIESQCSIDGILLLNKPQGMTSNAALQKAKHLFGAKKAGHTGSLDPLATGMLPLCFGEATKICQYLLNADKSYETIGRLGSKTNTADCTGEVIFCIENYTVSHEEMIATLEKYKGKIKQIPSMFSALKHKGTPLYRLAREGIEIERKARDIVISQLKLEQFDGECFTLTVSCSKGTYIRNLVEDIGDTLKAGAHMTKLHRLYTAGFENNRMYTLDELQDMPLSQRLACLIPIDQAIQHLTPVILSDSEVTAIRQGKVISNKTGAVEGEDLRLYGEQSQFIGIGQALIHGDIKAKRLVSFAL</sequence>
<protein>
    <recommendedName>
        <fullName evidence="1">tRNA pseudouridine synthase B</fullName>
        <ecNumber evidence="1">5.4.99.25</ecNumber>
    </recommendedName>
    <alternativeName>
        <fullName evidence="1">tRNA pseudouridine(55) synthase</fullName>
        <shortName evidence="1">Psi55 synthase</shortName>
    </alternativeName>
    <alternativeName>
        <fullName evidence="1">tRNA pseudouridylate synthase</fullName>
    </alternativeName>
    <alternativeName>
        <fullName evidence="1">tRNA-uridine isomerase</fullName>
    </alternativeName>
</protein>
<proteinExistence type="inferred from homology"/>
<gene>
    <name evidence="1" type="primary">truB</name>
    <name type="ordered locus">lpp2818</name>
</gene>
<keyword id="KW-0413">Isomerase</keyword>
<keyword id="KW-0819">tRNA processing</keyword>
<feature type="chain" id="PRO_0000121851" description="tRNA pseudouridine synthase B">
    <location>
        <begin position="1"/>
        <end position="303"/>
    </location>
</feature>
<feature type="active site" description="Nucleophile" evidence="1">
    <location>
        <position position="47"/>
    </location>
</feature>
<name>TRUB_LEGPA</name>
<dbReference type="EC" id="5.4.99.25" evidence="1"/>
<dbReference type="EMBL" id="CR628336">
    <property type="protein sequence ID" value="CAH13971.1"/>
    <property type="molecule type" value="Genomic_DNA"/>
</dbReference>
<dbReference type="RefSeq" id="WP_011947662.1">
    <property type="nucleotide sequence ID" value="NC_006368.1"/>
</dbReference>
<dbReference type="SMR" id="Q5X1C5"/>
<dbReference type="KEGG" id="lpp:lpp2818"/>
<dbReference type="LegioList" id="lpp2818"/>
<dbReference type="HOGENOM" id="CLU_032087_0_3_6"/>
<dbReference type="GO" id="GO:0003723">
    <property type="term" value="F:RNA binding"/>
    <property type="evidence" value="ECO:0007669"/>
    <property type="project" value="InterPro"/>
</dbReference>
<dbReference type="GO" id="GO:0160148">
    <property type="term" value="F:tRNA pseudouridine(55) synthase activity"/>
    <property type="evidence" value="ECO:0007669"/>
    <property type="project" value="UniProtKB-EC"/>
</dbReference>
<dbReference type="GO" id="GO:1990481">
    <property type="term" value="P:mRNA pseudouridine synthesis"/>
    <property type="evidence" value="ECO:0007669"/>
    <property type="project" value="TreeGrafter"/>
</dbReference>
<dbReference type="GO" id="GO:0031119">
    <property type="term" value="P:tRNA pseudouridine synthesis"/>
    <property type="evidence" value="ECO:0007669"/>
    <property type="project" value="UniProtKB-UniRule"/>
</dbReference>
<dbReference type="CDD" id="cd02573">
    <property type="entry name" value="PseudoU_synth_EcTruB"/>
    <property type="match status" value="1"/>
</dbReference>
<dbReference type="CDD" id="cd21152">
    <property type="entry name" value="PUA_TruB_bacterial"/>
    <property type="match status" value="1"/>
</dbReference>
<dbReference type="Gene3D" id="3.30.2350.10">
    <property type="entry name" value="Pseudouridine synthase"/>
    <property type="match status" value="1"/>
</dbReference>
<dbReference type="Gene3D" id="2.30.130.10">
    <property type="entry name" value="PUA domain"/>
    <property type="match status" value="1"/>
</dbReference>
<dbReference type="HAMAP" id="MF_01080">
    <property type="entry name" value="TruB_bact"/>
    <property type="match status" value="1"/>
</dbReference>
<dbReference type="InterPro" id="IPR020103">
    <property type="entry name" value="PsdUridine_synth_cat_dom_sf"/>
</dbReference>
<dbReference type="InterPro" id="IPR002501">
    <property type="entry name" value="PsdUridine_synth_N"/>
</dbReference>
<dbReference type="InterPro" id="IPR015947">
    <property type="entry name" value="PUA-like_sf"/>
</dbReference>
<dbReference type="InterPro" id="IPR036974">
    <property type="entry name" value="PUA_sf"/>
</dbReference>
<dbReference type="InterPro" id="IPR014780">
    <property type="entry name" value="tRNA_psdUridine_synth_TruB"/>
</dbReference>
<dbReference type="InterPro" id="IPR015240">
    <property type="entry name" value="tRNA_sdUridine_synth_fam1_C"/>
</dbReference>
<dbReference type="InterPro" id="IPR032819">
    <property type="entry name" value="TruB_C"/>
</dbReference>
<dbReference type="NCBIfam" id="TIGR00431">
    <property type="entry name" value="TruB"/>
    <property type="match status" value="1"/>
</dbReference>
<dbReference type="PANTHER" id="PTHR13767:SF2">
    <property type="entry name" value="PSEUDOURIDYLATE SYNTHASE TRUB1"/>
    <property type="match status" value="1"/>
</dbReference>
<dbReference type="PANTHER" id="PTHR13767">
    <property type="entry name" value="TRNA-PSEUDOURIDINE SYNTHASE"/>
    <property type="match status" value="1"/>
</dbReference>
<dbReference type="Pfam" id="PF09157">
    <property type="entry name" value="TruB-C_2"/>
    <property type="match status" value="1"/>
</dbReference>
<dbReference type="Pfam" id="PF16198">
    <property type="entry name" value="TruB_C_2"/>
    <property type="match status" value="1"/>
</dbReference>
<dbReference type="Pfam" id="PF01509">
    <property type="entry name" value="TruB_N"/>
    <property type="match status" value="1"/>
</dbReference>
<dbReference type="SUPFAM" id="SSF55120">
    <property type="entry name" value="Pseudouridine synthase"/>
    <property type="match status" value="1"/>
</dbReference>
<dbReference type="SUPFAM" id="SSF88697">
    <property type="entry name" value="PUA domain-like"/>
    <property type="match status" value="1"/>
</dbReference>
<accession>Q5X1C5</accession>
<reference key="1">
    <citation type="journal article" date="2004" name="Nat. Genet.">
        <title>Evidence in the Legionella pneumophila genome for exploitation of host cell functions and high genome plasticity.</title>
        <authorList>
            <person name="Cazalet C."/>
            <person name="Rusniok C."/>
            <person name="Brueggemann H."/>
            <person name="Zidane N."/>
            <person name="Magnier A."/>
            <person name="Ma L."/>
            <person name="Tichit M."/>
            <person name="Jarraud S."/>
            <person name="Bouchier C."/>
            <person name="Vandenesch F."/>
            <person name="Kunst F."/>
            <person name="Etienne J."/>
            <person name="Glaser P."/>
            <person name="Buchrieser C."/>
        </authorList>
    </citation>
    <scope>NUCLEOTIDE SEQUENCE [LARGE SCALE GENOMIC DNA]</scope>
    <source>
        <strain>Paris</strain>
    </source>
</reference>
<comment type="function">
    <text evidence="1">Responsible for synthesis of pseudouridine from uracil-55 in the psi GC loop of transfer RNAs.</text>
</comment>
<comment type="catalytic activity">
    <reaction evidence="1">
        <text>uridine(55) in tRNA = pseudouridine(55) in tRNA</text>
        <dbReference type="Rhea" id="RHEA:42532"/>
        <dbReference type="Rhea" id="RHEA-COMP:10101"/>
        <dbReference type="Rhea" id="RHEA-COMP:10102"/>
        <dbReference type="ChEBI" id="CHEBI:65314"/>
        <dbReference type="ChEBI" id="CHEBI:65315"/>
        <dbReference type="EC" id="5.4.99.25"/>
    </reaction>
</comment>
<comment type="similarity">
    <text evidence="1">Belongs to the pseudouridine synthase TruB family. Type 1 subfamily.</text>
</comment>
<organism>
    <name type="scientific">Legionella pneumophila (strain Paris)</name>
    <dbReference type="NCBI Taxonomy" id="297246"/>
    <lineage>
        <taxon>Bacteria</taxon>
        <taxon>Pseudomonadati</taxon>
        <taxon>Pseudomonadota</taxon>
        <taxon>Gammaproteobacteria</taxon>
        <taxon>Legionellales</taxon>
        <taxon>Legionellaceae</taxon>
        <taxon>Legionella</taxon>
    </lineage>
</organism>
<evidence type="ECO:0000255" key="1">
    <source>
        <dbReference type="HAMAP-Rule" id="MF_01080"/>
    </source>
</evidence>